<keyword id="KW-0004">4Fe-4S</keyword>
<keyword id="KW-0997">Cell inner membrane</keyword>
<keyword id="KW-1003">Cell membrane</keyword>
<keyword id="KW-0249">Electron transport</keyword>
<keyword id="KW-0408">Iron</keyword>
<keyword id="KW-0411">Iron-sulfur</keyword>
<keyword id="KW-0472">Membrane</keyword>
<keyword id="KW-0479">Metal-binding</keyword>
<keyword id="KW-1185">Reference proteome</keyword>
<keyword id="KW-0677">Repeat</keyword>
<keyword id="KW-1278">Translocase</keyword>
<keyword id="KW-0813">Transport</keyword>
<dbReference type="EC" id="7.-.-.-" evidence="1"/>
<dbReference type="EMBL" id="AL590842">
    <property type="protein sequence ID" value="CAL20874.1"/>
    <property type="molecule type" value="Genomic_DNA"/>
</dbReference>
<dbReference type="EMBL" id="AE009952">
    <property type="protein sequence ID" value="AAM85650.1"/>
    <property type="molecule type" value="Genomic_DNA"/>
</dbReference>
<dbReference type="EMBL" id="AE017042">
    <property type="protein sequence ID" value="AAS62259.1"/>
    <property type="molecule type" value="Genomic_DNA"/>
</dbReference>
<dbReference type="PIR" id="AG0273">
    <property type="entry name" value="AG0273"/>
</dbReference>
<dbReference type="RefSeq" id="YP_002347216.1">
    <property type="nucleotide sequence ID" value="NC_003143.1"/>
</dbReference>
<dbReference type="IntAct" id="Q8ZEC9">
    <property type="interactions" value="4"/>
</dbReference>
<dbReference type="STRING" id="214092.YPO2245"/>
<dbReference type="PaxDb" id="214092-YPO2245"/>
<dbReference type="DNASU" id="1147033"/>
<dbReference type="EnsemblBacteria" id="AAS62259">
    <property type="protein sequence ID" value="AAS62259"/>
    <property type="gene ID" value="YP_2043"/>
</dbReference>
<dbReference type="KEGG" id="ype:YPO2245"/>
<dbReference type="KEGG" id="ypk:y2086"/>
<dbReference type="KEGG" id="ypm:YP_2043"/>
<dbReference type="PATRIC" id="fig|214092.21.peg.2640"/>
<dbReference type="eggNOG" id="COG2878">
    <property type="taxonomic scope" value="Bacteria"/>
</dbReference>
<dbReference type="HOGENOM" id="CLU_063448_2_0_6"/>
<dbReference type="OMA" id="ITKCVPG"/>
<dbReference type="OrthoDB" id="9789936at2"/>
<dbReference type="Proteomes" id="UP000000815">
    <property type="component" value="Chromosome"/>
</dbReference>
<dbReference type="Proteomes" id="UP000001019">
    <property type="component" value="Chromosome"/>
</dbReference>
<dbReference type="Proteomes" id="UP000002490">
    <property type="component" value="Chromosome"/>
</dbReference>
<dbReference type="GO" id="GO:0005886">
    <property type="term" value="C:plasma membrane"/>
    <property type="evidence" value="ECO:0007669"/>
    <property type="project" value="UniProtKB-SubCell"/>
</dbReference>
<dbReference type="GO" id="GO:0051539">
    <property type="term" value="F:4 iron, 4 sulfur cluster binding"/>
    <property type="evidence" value="ECO:0007669"/>
    <property type="project" value="UniProtKB-UniRule"/>
</dbReference>
<dbReference type="GO" id="GO:0009055">
    <property type="term" value="F:electron transfer activity"/>
    <property type="evidence" value="ECO:0007669"/>
    <property type="project" value="InterPro"/>
</dbReference>
<dbReference type="GO" id="GO:0046872">
    <property type="term" value="F:metal ion binding"/>
    <property type="evidence" value="ECO:0007669"/>
    <property type="project" value="UniProtKB-KW"/>
</dbReference>
<dbReference type="GO" id="GO:0022900">
    <property type="term" value="P:electron transport chain"/>
    <property type="evidence" value="ECO:0007669"/>
    <property type="project" value="UniProtKB-UniRule"/>
</dbReference>
<dbReference type="FunFam" id="1.10.15.40:FF:000001">
    <property type="entry name" value="Ion-translocating oxidoreductase complex subunit B"/>
    <property type="match status" value="1"/>
</dbReference>
<dbReference type="Gene3D" id="3.30.70.20">
    <property type="match status" value="1"/>
</dbReference>
<dbReference type="Gene3D" id="1.10.15.40">
    <property type="entry name" value="Electron transport complex subunit B, putative Fe-S cluster"/>
    <property type="match status" value="1"/>
</dbReference>
<dbReference type="HAMAP" id="MF_00463">
    <property type="entry name" value="RsxB_RnfB"/>
    <property type="match status" value="1"/>
</dbReference>
<dbReference type="InterPro" id="IPR007202">
    <property type="entry name" value="4Fe-4S_dom"/>
</dbReference>
<dbReference type="InterPro" id="IPR017896">
    <property type="entry name" value="4Fe4S_Fe-S-bd"/>
</dbReference>
<dbReference type="InterPro" id="IPR017900">
    <property type="entry name" value="4Fe4S_Fe_S_CS"/>
</dbReference>
<dbReference type="InterPro" id="IPR010207">
    <property type="entry name" value="Elect_transpt_cplx_RnfB/RsxB"/>
</dbReference>
<dbReference type="InterPro" id="IPR016463">
    <property type="entry name" value="RnfB/RsxB_Proteobac"/>
</dbReference>
<dbReference type="InterPro" id="IPR050294">
    <property type="entry name" value="RnfB_subfamily"/>
</dbReference>
<dbReference type="NCBIfam" id="NF003475">
    <property type="entry name" value="PRK05113.1"/>
    <property type="match status" value="1"/>
</dbReference>
<dbReference type="NCBIfam" id="TIGR01944">
    <property type="entry name" value="rnfB"/>
    <property type="match status" value="1"/>
</dbReference>
<dbReference type="PANTHER" id="PTHR42859:SF3">
    <property type="entry name" value="ION-TRANSLOCATING OXIDOREDUCTASE COMPLEX SUBUNIT B"/>
    <property type="match status" value="1"/>
</dbReference>
<dbReference type="PANTHER" id="PTHR42859">
    <property type="entry name" value="OXIDOREDUCTASE"/>
    <property type="match status" value="1"/>
</dbReference>
<dbReference type="Pfam" id="PF14697">
    <property type="entry name" value="Fer4_21"/>
    <property type="match status" value="1"/>
</dbReference>
<dbReference type="Pfam" id="PF04060">
    <property type="entry name" value="FeS"/>
    <property type="match status" value="1"/>
</dbReference>
<dbReference type="PIRSF" id="PIRSF005784">
    <property type="entry name" value="Elect_transpt_RnfB"/>
    <property type="match status" value="1"/>
</dbReference>
<dbReference type="SUPFAM" id="SSF54862">
    <property type="entry name" value="4Fe-4S ferredoxins"/>
    <property type="match status" value="1"/>
</dbReference>
<dbReference type="PROSITE" id="PS51656">
    <property type="entry name" value="4FE4S"/>
    <property type="match status" value="1"/>
</dbReference>
<dbReference type="PROSITE" id="PS00198">
    <property type="entry name" value="4FE4S_FER_1"/>
    <property type="match status" value="2"/>
</dbReference>
<dbReference type="PROSITE" id="PS51379">
    <property type="entry name" value="4FE4S_FER_2"/>
    <property type="match status" value="2"/>
</dbReference>
<protein>
    <recommendedName>
        <fullName evidence="1">Ion-translocating oxidoreductase complex subunit B</fullName>
        <ecNumber evidence="1">7.-.-.-</ecNumber>
    </recommendedName>
    <alternativeName>
        <fullName evidence="1">Rnf electron transport complex subunit B</fullName>
    </alternativeName>
</protein>
<feature type="chain" id="PRO_0000216284" description="Ion-translocating oxidoreductase complex subunit B">
    <location>
        <begin position="1"/>
        <end position="188"/>
    </location>
</feature>
<feature type="domain" description="4Fe-4S" evidence="1">
    <location>
        <begin position="32"/>
        <end position="91"/>
    </location>
</feature>
<feature type="domain" description="4Fe-4S ferredoxin-type 1" evidence="1">
    <location>
        <begin position="108"/>
        <end position="137"/>
    </location>
</feature>
<feature type="domain" description="4Fe-4S ferredoxin-type 2" evidence="1">
    <location>
        <begin position="138"/>
        <end position="167"/>
    </location>
</feature>
<feature type="region of interest" description="Hydrophobic" evidence="1">
    <location>
        <begin position="1"/>
        <end position="26"/>
    </location>
</feature>
<feature type="binding site" evidence="1">
    <location>
        <position position="49"/>
    </location>
    <ligand>
        <name>[4Fe-4S] cluster</name>
        <dbReference type="ChEBI" id="CHEBI:49883"/>
        <label>1</label>
    </ligand>
</feature>
<feature type="binding site" evidence="1">
    <location>
        <position position="52"/>
    </location>
    <ligand>
        <name>[4Fe-4S] cluster</name>
        <dbReference type="ChEBI" id="CHEBI:49883"/>
        <label>1</label>
    </ligand>
</feature>
<feature type="binding site" evidence="1">
    <location>
        <position position="57"/>
    </location>
    <ligand>
        <name>[4Fe-4S] cluster</name>
        <dbReference type="ChEBI" id="CHEBI:49883"/>
        <label>1</label>
    </ligand>
</feature>
<feature type="binding site" evidence="1">
    <location>
        <position position="74"/>
    </location>
    <ligand>
        <name>[4Fe-4S] cluster</name>
        <dbReference type="ChEBI" id="CHEBI:49883"/>
        <label>1</label>
    </ligand>
</feature>
<feature type="binding site" evidence="1">
    <location>
        <position position="117"/>
    </location>
    <ligand>
        <name>[4Fe-4S] cluster</name>
        <dbReference type="ChEBI" id="CHEBI:49883"/>
        <label>2</label>
    </ligand>
</feature>
<feature type="binding site" evidence="1">
    <location>
        <position position="120"/>
    </location>
    <ligand>
        <name>[4Fe-4S] cluster</name>
        <dbReference type="ChEBI" id="CHEBI:49883"/>
        <label>2</label>
    </ligand>
</feature>
<feature type="binding site" evidence="1">
    <location>
        <position position="123"/>
    </location>
    <ligand>
        <name>[4Fe-4S] cluster</name>
        <dbReference type="ChEBI" id="CHEBI:49883"/>
        <label>2</label>
    </ligand>
</feature>
<feature type="binding site" evidence="1">
    <location>
        <position position="127"/>
    </location>
    <ligand>
        <name>[4Fe-4S] cluster</name>
        <dbReference type="ChEBI" id="CHEBI:49883"/>
        <label>3</label>
    </ligand>
</feature>
<feature type="binding site" evidence="1">
    <location>
        <position position="147"/>
    </location>
    <ligand>
        <name>[4Fe-4S] cluster</name>
        <dbReference type="ChEBI" id="CHEBI:49883"/>
        <label>3</label>
    </ligand>
</feature>
<feature type="binding site" evidence="1">
    <location>
        <position position="150"/>
    </location>
    <ligand>
        <name>[4Fe-4S] cluster</name>
        <dbReference type="ChEBI" id="CHEBI:49883"/>
        <label>3</label>
    </ligand>
</feature>
<feature type="binding site" evidence="1">
    <location>
        <position position="153"/>
    </location>
    <ligand>
        <name>[4Fe-4S] cluster</name>
        <dbReference type="ChEBI" id="CHEBI:49883"/>
        <label>3</label>
    </ligand>
</feature>
<feature type="binding site" evidence="1">
    <location>
        <position position="157"/>
    </location>
    <ligand>
        <name>[4Fe-4S] cluster</name>
        <dbReference type="ChEBI" id="CHEBI:49883"/>
        <label>2</label>
    </ligand>
</feature>
<organism>
    <name type="scientific">Yersinia pestis</name>
    <dbReference type="NCBI Taxonomy" id="632"/>
    <lineage>
        <taxon>Bacteria</taxon>
        <taxon>Pseudomonadati</taxon>
        <taxon>Pseudomonadota</taxon>
        <taxon>Gammaproteobacteria</taxon>
        <taxon>Enterobacterales</taxon>
        <taxon>Yersiniaceae</taxon>
        <taxon>Yersinia</taxon>
    </lineage>
</organism>
<comment type="function">
    <text evidence="1">Part of a membrane-bound complex that couples electron transfer with translocation of ions across the membrane.</text>
</comment>
<comment type="cofactor">
    <cofactor evidence="1">
        <name>[4Fe-4S] cluster</name>
        <dbReference type="ChEBI" id="CHEBI:49883"/>
    </cofactor>
    <text evidence="1">Binds 3 [4Fe-4S] clusters.</text>
</comment>
<comment type="subunit">
    <text evidence="1">The complex is composed of six subunits: RnfA, RnfB, RnfC, RnfD, RnfE and RnfG.</text>
</comment>
<comment type="subcellular location">
    <subcellularLocation>
        <location evidence="1">Cell inner membrane</location>
    </subcellularLocation>
</comment>
<comment type="similarity">
    <text evidence="1">Belongs to the 4Fe4S bacterial-type ferredoxin family. RnfB subfamily.</text>
</comment>
<name>RNFB_YERPE</name>
<evidence type="ECO:0000255" key="1">
    <source>
        <dbReference type="HAMAP-Rule" id="MF_00463"/>
    </source>
</evidence>
<proteinExistence type="inferred from homology"/>
<accession>Q8ZEC9</accession>
<accession>Q0WES2</accession>
<gene>
    <name evidence="1" type="primary">rnfB</name>
    <name type="ordered locus">YPO2245</name>
    <name type="ordered locus">y2086</name>
    <name type="ordered locus">YP_2043</name>
</gene>
<reference key="1">
    <citation type="journal article" date="2001" name="Nature">
        <title>Genome sequence of Yersinia pestis, the causative agent of plague.</title>
        <authorList>
            <person name="Parkhill J."/>
            <person name="Wren B.W."/>
            <person name="Thomson N.R."/>
            <person name="Titball R.W."/>
            <person name="Holden M.T.G."/>
            <person name="Prentice M.B."/>
            <person name="Sebaihia M."/>
            <person name="James K.D."/>
            <person name="Churcher C.M."/>
            <person name="Mungall K.L."/>
            <person name="Baker S."/>
            <person name="Basham D."/>
            <person name="Bentley S.D."/>
            <person name="Brooks K."/>
            <person name="Cerdeno-Tarraga A.-M."/>
            <person name="Chillingworth T."/>
            <person name="Cronin A."/>
            <person name="Davies R.M."/>
            <person name="Davis P."/>
            <person name="Dougan G."/>
            <person name="Feltwell T."/>
            <person name="Hamlin N."/>
            <person name="Holroyd S."/>
            <person name="Jagels K."/>
            <person name="Karlyshev A.V."/>
            <person name="Leather S."/>
            <person name="Moule S."/>
            <person name="Oyston P.C.F."/>
            <person name="Quail M.A."/>
            <person name="Rutherford K.M."/>
            <person name="Simmonds M."/>
            <person name="Skelton J."/>
            <person name="Stevens K."/>
            <person name="Whitehead S."/>
            <person name="Barrell B.G."/>
        </authorList>
    </citation>
    <scope>NUCLEOTIDE SEQUENCE [LARGE SCALE GENOMIC DNA]</scope>
    <source>
        <strain>CO-92 / Biovar Orientalis</strain>
    </source>
</reference>
<reference key="2">
    <citation type="journal article" date="2002" name="J. Bacteriol.">
        <title>Genome sequence of Yersinia pestis KIM.</title>
        <authorList>
            <person name="Deng W."/>
            <person name="Burland V."/>
            <person name="Plunkett G. III"/>
            <person name="Boutin A."/>
            <person name="Mayhew G.F."/>
            <person name="Liss P."/>
            <person name="Perna N.T."/>
            <person name="Rose D.J."/>
            <person name="Mau B."/>
            <person name="Zhou S."/>
            <person name="Schwartz D.C."/>
            <person name="Fetherston J.D."/>
            <person name="Lindler L.E."/>
            <person name="Brubaker R.R."/>
            <person name="Plano G.V."/>
            <person name="Straley S.C."/>
            <person name="McDonough K.A."/>
            <person name="Nilles M.L."/>
            <person name="Matson J.S."/>
            <person name="Blattner F.R."/>
            <person name="Perry R.D."/>
        </authorList>
    </citation>
    <scope>NUCLEOTIDE SEQUENCE [LARGE SCALE GENOMIC DNA]</scope>
    <source>
        <strain>KIM10+ / Biovar Mediaevalis</strain>
    </source>
</reference>
<reference key="3">
    <citation type="journal article" date="2004" name="DNA Res.">
        <title>Complete genome sequence of Yersinia pestis strain 91001, an isolate avirulent to humans.</title>
        <authorList>
            <person name="Song Y."/>
            <person name="Tong Z."/>
            <person name="Wang J."/>
            <person name="Wang L."/>
            <person name="Guo Z."/>
            <person name="Han Y."/>
            <person name="Zhang J."/>
            <person name="Pei D."/>
            <person name="Zhou D."/>
            <person name="Qin H."/>
            <person name="Pang X."/>
            <person name="Han Y."/>
            <person name="Zhai J."/>
            <person name="Li M."/>
            <person name="Cui B."/>
            <person name="Qi Z."/>
            <person name="Jin L."/>
            <person name="Dai R."/>
            <person name="Chen F."/>
            <person name="Li S."/>
            <person name="Ye C."/>
            <person name="Du Z."/>
            <person name="Lin W."/>
            <person name="Wang J."/>
            <person name="Yu J."/>
            <person name="Yang H."/>
            <person name="Wang J."/>
            <person name="Huang P."/>
            <person name="Yang R."/>
        </authorList>
    </citation>
    <scope>NUCLEOTIDE SEQUENCE [LARGE SCALE GENOMIC DNA]</scope>
    <source>
        <strain>91001 / Biovar Mediaevalis</strain>
    </source>
</reference>
<sequence length="188" mass="19887">MMSLWIAIGALSTLALVSGVVLGFAARRFQVDEDPVVEQVDAILPQSQCGQCGYPGCRPYAEAVSTGGEKINKCAPGGEQVMLKLAELLAVEPQPLDGDESAAHPQRKVAFIDEANCIGCTKCIQACPVDAIIGATRAMHTVLSDLCTGCDLCVAPCPTDCIEMIPVATTTANWKWDLNTIPVKNLPN</sequence>